<organism>
    <name type="scientific">Chenopodium album</name>
    <name type="common">Fat hen</name>
    <dbReference type="NCBI Taxonomy" id="3559"/>
    <lineage>
        <taxon>Eukaryota</taxon>
        <taxon>Viridiplantae</taxon>
        <taxon>Streptophyta</taxon>
        <taxon>Embryophyta</taxon>
        <taxon>Tracheophyta</taxon>
        <taxon>Spermatophyta</taxon>
        <taxon>Magnoliopsida</taxon>
        <taxon>eudicotyledons</taxon>
        <taxon>Gunneridae</taxon>
        <taxon>Pentapetalae</taxon>
        <taxon>Caryophyllales</taxon>
        <taxon>Chenopodiaceae</taxon>
        <taxon>Chenopodioideae</taxon>
        <taxon>Atripliceae</taxon>
        <taxon>Chenopodium</taxon>
    </lineage>
</organism>
<keyword id="KW-0020">Allergen</keyword>
<keyword id="KW-0903">Direct protein sequencing</keyword>
<keyword id="KW-1015">Disulfide bond</keyword>
<keyword id="KW-0325">Glycoprotein</keyword>
<keyword id="KW-0964">Secreted</keyword>
<keyword id="KW-0732">Signal</keyword>
<proteinExistence type="evidence at protein level"/>
<evidence type="ECO:0000250" key="1"/>
<evidence type="ECO:0000255" key="2"/>
<evidence type="ECO:0000305" key="3"/>
<protein>
    <recommendedName>
        <fullName>Pollen allergen Che a 1</fullName>
    </recommendedName>
    <allergenName>Che a 1</allergenName>
</protein>
<comment type="subcellular location">
    <subcellularLocation>
        <location evidence="1">Secreted</location>
    </subcellularLocation>
</comment>
<comment type="allergen">
    <text>Causes an allergic reaction in human. Binds to IgE.</text>
</comment>
<comment type="similarity">
    <text evidence="3">Belongs to the Ole e I family.</text>
</comment>
<reference key="1">
    <citation type="journal article" date="2002" name="Int. Arch. Allergy Immunol.">
        <title>Identification and characterization of Che a 1 allergen from Chenopodium album pollen.</title>
        <authorList>
            <person name="Barderas R."/>
            <person name="Villalba M."/>
            <person name="Lombardero M."/>
            <person name="Rodriguez R."/>
        </authorList>
    </citation>
    <scope>NUCLEOTIDE SEQUENCE [MRNA]</scope>
    <scope>PARTIAL PROTEIN SEQUENCE</scope>
    <source>
        <tissue>Pollen</tissue>
    </source>
</reference>
<sequence length="168" mass="18295">MAKCQAVFLLVGALCVLSLAGVANAAENHFKVQGMVYCDTCRIQFMTRISTIMEGATVKLECRNITAGTQTFKAEAVTDKVGQYSIPVNGDFEDDICEIELVKSPNSECSEVSHDVYAKQSAKVSLTSNNGEASDIRSANALGFMRKEPLKECPEVLKELDLYDVKAN</sequence>
<accession>Q8LGR0</accession>
<name>CHE1_CHEAL</name>
<dbReference type="EMBL" id="AY049012">
    <property type="protein sequence ID" value="AAL07319.1"/>
    <property type="molecule type" value="mRNA"/>
</dbReference>
<dbReference type="SMR" id="Q8LGR0"/>
<dbReference type="Allergome" id="199">
    <property type="allergen name" value="Che a 1"/>
</dbReference>
<dbReference type="Allergome" id="3188">
    <property type="allergen name" value="Che a 1.0101"/>
</dbReference>
<dbReference type="GO" id="GO:0005615">
    <property type="term" value="C:extracellular space"/>
    <property type="evidence" value="ECO:0007669"/>
    <property type="project" value="InterPro"/>
</dbReference>
<dbReference type="InterPro" id="IPR006040">
    <property type="entry name" value="Allergen_Ole_e_I_CS"/>
</dbReference>
<dbReference type="InterPro" id="IPR006041">
    <property type="entry name" value="Pollen_Ole_e1_allergen"/>
</dbReference>
<dbReference type="PANTHER" id="PTHR31614:SF2">
    <property type="entry name" value="F28N24.16 PROTEIN"/>
    <property type="match status" value="1"/>
</dbReference>
<dbReference type="PANTHER" id="PTHR31614">
    <property type="entry name" value="PROTEIN DOWNSTREAM OF FLC-RELATED"/>
    <property type="match status" value="1"/>
</dbReference>
<dbReference type="Pfam" id="PF01190">
    <property type="entry name" value="Pollen_Ole_e_1"/>
    <property type="match status" value="1"/>
</dbReference>
<dbReference type="PROSITE" id="PS00925">
    <property type="entry name" value="OLEEI"/>
    <property type="match status" value="1"/>
</dbReference>
<feature type="signal peptide">
    <location>
        <begin position="1"/>
        <end position="25"/>
    </location>
</feature>
<feature type="chain" id="PRO_0000020070" description="Pollen allergen Che a 1">
    <location>
        <begin position="26"/>
        <end position="168"/>
    </location>
</feature>
<feature type="glycosylation site" description="N-linked (GlcNAc...) asparagine" evidence="2">
    <location>
        <position position="64"/>
    </location>
</feature>
<feature type="disulfide bond" evidence="1">
    <location>
        <begin position="38"/>
        <end position="109"/>
    </location>
</feature>
<feature type="disulfide bond" evidence="1">
    <location>
        <begin position="41"/>
        <end position="153"/>
    </location>
</feature>
<feature type="disulfide bond" evidence="1">
    <location>
        <begin position="62"/>
        <end position="97"/>
    </location>
</feature>